<gene>
    <name evidence="1" type="primary">argG</name>
    <name type="ordered locus">SAS0831</name>
</gene>
<feature type="chain" id="PRO_0000148639" description="Argininosuccinate synthase">
    <location>
        <begin position="1"/>
        <end position="401"/>
    </location>
</feature>
<feature type="binding site" evidence="1">
    <location>
        <begin position="8"/>
        <end position="16"/>
    </location>
    <ligand>
        <name>ATP</name>
        <dbReference type="ChEBI" id="CHEBI:30616"/>
    </ligand>
</feature>
<feature type="binding site" evidence="1">
    <location>
        <position position="85"/>
    </location>
    <ligand>
        <name>L-citrulline</name>
        <dbReference type="ChEBI" id="CHEBI:57743"/>
    </ligand>
</feature>
<feature type="binding site" evidence="1">
    <location>
        <position position="115"/>
    </location>
    <ligand>
        <name>ATP</name>
        <dbReference type="ChEBI" id="CHEBI:30616"/>
    </ligand>
</feature>
<feature type="binding site" evidence="1">
    <location>
        <position position="117"/>
    </location>
    <ligand>
        <name>L-aspartate</name>
        <dbReference type="ChEBI" id="CHEBI:29991"/>
    </ligand>
</feature>
<feature type="binding site" evidence="1">
    <location>
        <position position="121"/>
    </location>
    <ligand>
        <name>L-aspartate</name>
        <dbReference type="ChEBI" id="CHEBI:29991"/>
    </ligand>
</feature>
<feature type="binding site" evidence="1">
    <location>
        <position position="121"/>
    </location>
    <ligand>
        <name>L-citrulline</name>
        <dbReference type="ChEBI" id="CHEBI:57743"/>
    </ligand>
</feature>
<feature type="binding site" evidence="1">
    <location>
        <position position="122"/>
    </location>
    <ligand>
        <name>L-aspartate</name>
        <dbReference type="ChEBI" id="CHEBI:29991"/>
    </ligand>
</feature>
<feature type="binding site" evidence="1">
    <location>
        <position position="125"/>
    </location>
    <ligand>
        <name>L-citrulline</name>
        <dbReference type="ChEBI" id="CHEBI:57743"/>
    </ligand>
</feature>
<feature type="binding site" evidence="1">
    <location>
        <position position="173"/>
    </location>
    <ligand>
        <name>L-citrulline</name>
        <dbReference type="ChEBI" id="CHEBI:57743"/>
    </ligand>
</feature>
<feature type="binding site" evidence="1">
    <location>
        <position position="258"/>
    </location>
    <ligand>
        <name>L-citrulline</name>
        <dbReference type="ChEBI" id="CHEBI:57743"/>
    </ligand>
</feature>
<feature type="binding site" evidence="1">
    <location>
        <position position="270"/>
    </location>
    <ligand>
        <name>L-citrulline</name>
        <dbReference type="ChEBI" id="CHEBI:57743"/>
    </ligand>
</feature>
<keyword id="KW-0028">Amino-acid biosynthesis</keyword>
<keyword id="KW-0055">Arginine biosynthesis</keyword>
<keyword id="KW-0067">ATP-binding</keyword>
<keyword id="KW-0963">Cytoplasm</keyword>
<keyword id="KW-0436">Ligase</keyword>
<keyword id="KW-0547">Nucleotide-binding</keyword>
<proteinExistence type="inferred from homology"/>
<comment type="catalytic activity">
    <reaction evidence="1">
        <text>L-citrulline + L-aspartate + ATP = 2-(N(omega)-L-arginino)succinate + AMP + diphosphate + H(+)</text>
        <dbReference type="Rhea" id="RHEA:10932"/>
        <dbReference type="ChEBI" id="CHEBI:15378"/>
        <dbReference type="ChEBI" id="CHEBI:29991"/>
        <dbReference type="ChEBI" id="CHEBI:30616"/>
        <dbReference type="ChEBI" id="CHEBI:33019"/>
        <dbReference type="ChEBI" id="CHEBI:57472"/>
        <dbReference type="ChEBI" id="CHEBI:57743"/>
        <dbReference type="ChEBI" id="CHEBI:456215"/>
        <dbReference type="EC" id="6.3.4.5"/>
    </reaction>
</comment>
<comment type="pathway">
    <text evidence="1">Amino-acid biosynthesis; L-arginine biosynthesis; L-arginine from L-ornithine and carbamoyl phosphate: step 2/3.</text>
</comment>
<comment type="subunit">
    <text evidence="1">Homotetramer.</text>
</comment>
<comment type="subcellular location">
    <subcellularLocation>
        <location evidence="1">Cytoplasm</location>
    </subcellularLocation>
</comment>
<comment type="similarity">
    <text evidence="1">Belongs to the argininosuccinate synthase family. Type 1 subfamily.</text>
</comment>
<dbReference type="EC" id="6.3.4.5" evidence="1"/>
<dbReference type="EMBL" id="BX571857">
    <property type="protein sequence ID" value="CAG42606.1"/>
    <property type="molecule type" value="Genomic_DNA"/>
</dbReference>
<dbReference type="RefSeq" id="WP_000660041.1">
    <property type="nucleotide sequence ID" value="NC_002953.3"/>
</dbReference>
<dbReference type="SMR" id="Q6GAW5"/>
<dbReference type="KEGG" id="sas:SAS0831"/>
<dbReference type="HOGENOM" id="CLU_032784_4_2_9"/>
<dbReference type="UniPathway" id="UPA00068">
    <property type="reaction ID" value="UER00113"/>
</dbReference>
<dbReference type="GO" id="GO:0005737">
    <property type="term" value="C:cytoplasm"/>
    <property type="evidence" value="ECO:0007669"/>
    <property type="project" value="UniProtKB-SubCell"/>
</dbReference>
<dbReference type="GO" id="GO:0004055">
    <property type="term" value="F:argininosuccinate synthase activity"/>
    <property type="evidence" value="ECO:0007669"/>
    <property type="project" value="UniProtKB-UniRule"/>
</dbReference>
<dbReference type="GO" id="GO:0005524">
    <property type="term" value="F:ATP binding"/>
    <property type="evidence" value="ECO:0007669"/>
    <property type="project" value="UniProtKB-UniRule"/>
</dbReference>
<dbReference type="GO" id="GO:0000053">
    <property type="term" value="P:argininosuccinate metabolic process"/>
    <property type="evidence" value="ECO:0007669"/>
    <property type="project" value="TreeGrafter"/>
</dbReference>
<dbReference type="GO" id="GO:0006526">
    <property type="term" value="P:L-arginine biosynthetic process"/>
    <property type="evidence" value="ECO:0007669"/>
    <property type="project" value="UniProtKB-UniRule"/>
</dbReference>
<dbReference type="GO" id="GO:0000050">
    <property type="term" value="P:urea cycle"/>
    <property type="evidence" value="ECO:0007669"/>
    <property type="project" value="TreeGrafter"/>
</dbReference>
<dbReference type="CDD" id="cd01999">
    <property type="entry name" value="ASS"/>
    <property type="match status" value="1"/>
</dbReference>
<dbReference type="FunFam" id="1.20.5.470:FF:000002">
    <property type="entry name" value="Argininosuccinate synthase"/>
    <property type="match status" value="1"/>
</dbReference>
<dbReference type="FunFam" id="3.40.50.620:FF:000038">
    <property type="entry name" value="Argininosuccinate synthase"/>
    <property type="match status" value="1"/>
</dbReference>
<dbReference type="FunFam" id="3.90.1260.10:FF:000007">
    <property type="entry name" value="Argininosuccinate synthase"/>
    <property type="match status" value="1"/>
</dbReference>
<dbReference type="Gene3D" id="3.90.1260.10">
    <property type="entry name" value="Argininosuccinate synthetase, chain A, domain 2"/>
    <property type="match status" value="1"/>
</dbReference>
<dbReference type="Gene3D" id="3.40.50.620">
    <property type="entry name" value="HUPs"/>
    <property type="match status" value="1"/>
</dbReference>
<dbReference type="Gene3D" id="1.20.5.470">
    <property type="entry name" value="Single helix bin"/>
    <property type="match status" value="1"/>
</dbReference>
<dbReference type="HAMAP" id="MF_00005">
    <property type="entry name" value="Arg_succ_synth_type1"/>
    <property type="match status" value="1"/>
</dbReference>
<dbReference type="InterPro" id="IPR048268">
    <property type="entry name" value="Arginosuc_syn_C"/>
</dbReference>
<dbReference type="InterPro" id="IPR048267">
    <property type="entry name" value="Arginosuc_syn_N"/>
</dbReference>
<dbReference type="InterPro" id="IPR001518">
    <property type="entry name" value="Arginosuc_synth"/>
</dbReference>
<dbReference type="InterPro" id="IPR018223">
    <property type="entry name" value="Arginosuc_synth_CS"/>
</dbReference>
<dbReference type="InterPro" id="IPR023434">
    <property type="entry name" value="Arginosuc_synth_type_1_subfam"/>
</dbReference>
<dbReference type="InterPro" id="IPR024074">
    <property type="entry name" value="AS_cat/multimer_dom_body"/>
</dbReference>
<dbReference type="InterPro" id="IPR014729">
    <property type="entry name" value="Rossmann-like_a/b/a_fold"/>
</dbReference>
<dbReference type="NCBIfam" id="TIGR00032">
    <property type="entry name" value="argG"/>
    <property type="match status" value="1"/>
</dbReference>
<dbReference type="NCBIfam" id="NF001770">
    <property type="entry name" value="PRK00509.1"/>
    <property type="match status" value="1"/>
</dbReference>
<dbReference type="PANTHER" id="PTHR11587">
    <property type="entry name" value="ARGININOSUCCINATE SYNTHASE"/>
    <property type="match status" value="1"/>
</dbReference>
<dbReference type="PANTHER" id="PTHR11587:SF2">
    <property type="entry name" value="ARGININOSUCCINATE SYNTHASE"/>
    <property type="match status" value="1"/>
</dbReference>
<dbReference type="Pfam" id="PF20979">
    <property type="entry name" value="Arginosuc_syn_C"/>
    <property type="match status" value="1"/>
</dbReference>
<dbReference type="Pfam" id="PF00764">
    <property type="entry name" value="Arginosuc_synth"/>
    <property type="match status" value="1"/>
</dbReference>
<dbReference type="SUPFAM" id="SSF52402">
    <property type="entry name" value="Adenine nucleotide alpha hydrolases-like"/>
    <property type="match status" value="1"/>
</dbReference>
<dbReference type="SUPFAM" id="SSF69864">
    <property type="entry name" value="Argininosuccinate synthetase, C-terminal domain"/>
    <property type="match status" value="1"/>
</dbReference>
<dbReference type="PROSITE" id="PS00564">
    <property type="entry name" value="ARGININOSUCCIN_SYN_1"/>
    <property type="match status" value="1"/>
</dbReference>
<dbReference type="PROSITE" id="PS00565">
    <property type="entry name" value="ARGININOSUCCIN_SYN_2"/>
    <property type="match status" value="1"/>
</dbReference>
<evidence type="ECO:0000255" key="1">
    <source>
        <dbReference type="HAMAP-Rule" id="MF_00005"/>
    </source>
</evidence>
<sequence>MKEKIVLAYSGGLDTSVAVQWLIDKGYDVVACCLDVGEGKDLDIVYKKALDMGAVECHIIDATKEFSDEYVSYAIKGNLMYENAYPLVSALSRPLIAKKLVEIAEKTNSVGIAHGCTGKGNDQVRFEVAIKALNPSLKAFAPVREWAWSREEEIDYAIKHNIPVSINHDSPYSIDQNLWGRANECGILEDPYAAPPEDAFDLTNALEETPDAADEIILTFDKGIPVQIDGKTYELDDLILTLNALAGKHGIGRIDHVENRLVGIKSREIYEAPAAEVILKAHKALETITLTKDVAHFKPIIEKQFAEQLYNGLWFSPLTDSLKLFIDSTQQYVSGDVRIKLFKGNAIVNGRKSPYTLYDEKLATYTKEDAFNQDAAVGFIDIYGLPTQVNSMLHGGYSNEQ</sequence>
<reference key="1">
    <citation type="journal article" date="2004" name="Proc. Natl. Acad. Sci. U.S.A.">
        <title>Complete genomes of two clinical Staphylococcus aureus strains: evidence for the rapid evolution of virulence and drug resistance.</title>
        <authorList>
            <person name="Holden M.T.G."/>
            <person name="Feil E.J."/>
            <person name="Lindsay J.A."/>
            <person name="Peacock S.J."/>
            <person name="Day N.P.J."/>
            <person name="Enright M.C."/>
            <person name="Foster T.J."/>
            <person name="Moore C.E."/>
            <person name="Hurst L."/>
            <person name="Atkin R."/>
            <person name="Barron A."/>
            <person name="Bason N."/>
            <person name="Bentley S.D."/>
            <person name="Chillingworth C."/>
            <person name="Chillingworth T."/>
            <person name="Churcher C."/>
            <person name="Clark L."/>
            <person name="Corton C."/>
            <person name="Cronin A."/>
            <person name="Doggett J."/>
            <person name="Dowd L."/>
            <person name="Feltwell T."/>
            <person name="Hance Z."/>
            <person name="Harris B."/>
            <person name="Hauser H."/>
            <person name="Holroyd S."/>
            <person name="Jagels K."/>
            <person name="James K.D."/>
            <person name="Lennard N."/>
            <person name="Line A."/>
            <person name="Mayes R."/>
            <person name="Moule S."/>
            <person name="Mungall K."/>
            <person name="Ormond D."/>
            <person name="Quail M.A."/>
            <person name="Rabbinowitsch E."/>
            <person name="Rutherford K.M."/>
            <person name="Sanders M."/>
            <person name="Sharp S."/>
            <person name="Simmonds M."/>
            <person name="Stevens K."/>
            <person name="Whitehead S."/>
            <person name="Barrell B.G."/>
            <person name="Spratt B.G."/>
            <person name="Parkhill J."/>
        </authorList>
    </citation>
    <scope>NUCLEOTIDE SEQUENCE [LARGE SCALE GENOMIC DNA]</scope>
    <source>
        <strain>MSSA476</strain>
    </source>
</reference>
<organism>
    <name type="scientific">Staphylococcus aureus (strain MSSA476)</name>
    <dbReference type="NCBI Taxonomy" id="282459"/>
    <lineage>
        <taxon>Bacteria</taxon>
        <taxon>Bacillati</taxon>
        <taxon>Bacillota</taxon>
        <taxon>Bacilli</taxon>
        <taxon>Bacillales</taxon>
        <taxon>Staphylococcaceae</taxon>
        <taxon>Staphylococcus</taxon>
    </lineage>
</organism>
<name>ASSY_STAAS</name>
<accession>Q6GAW5</accession>
<protein>
    <recommendedName>
        <fullName evidence="1">Argininosuccinate synthase</fullName>
        <ecNumber evidence="1">6.3.4.5</ecNumber>
    </recommendedName>
    <alternativeName>
        <fullName evidence="1">Citrulline--aspartate ligase</fullName>
    </alternativeName>
</protein>